<gene>
    <name evidence="2" type="primary">EIF3M</name>
</gene>
<comment type="function">
    <text evidence="2">Component of the eukaryotic translation initiation factor 3 (eIF-3) complex, which is required for several steps in the initiation of protein synthesis. The eIF-3 complex associates with the 40S ribosome and facilitates the recruitment of eIF-1, eIF-1A, eIF-2:GTP:methionyl-tRNAi and eIF-5 to form the 43S pre-initiation complex (43S PIC). The eIF-3 complex stimulates mRNA recruitment to the 43S PIC and scanning of the mRNA for AUG recognition. The eIF-3 complex is also required for disassembly and recycling of post-termination ribosomal complexes and subsequently prevents premature joining of the 40S and 60S ribosomal subunits prior to initiation. The eIF-3 complex specifically targets and initiates translation of a subset of mRNAs involved in cell proliferation, including cell cycling, differentiation and apoptosis, and uses different modes of RNA stem-loop binding to exert either translational activation or repression.</text>
</comment>
<comment type="subunit">
    <text evidence="2">Component of the eukaryotic translation initiation factor 3 (eIF-3) complex, which is composed of 13 subunits: EIF3A, EIF3B, EIF3C, EIF3D, EIF3E, EIF3F, EIF3G, EIF3H, EIF3I, EIF3J, EIF3K, EIF3L and EIF3M. The eIF-3 complex appears to include 3 stable modules: module A is composed of EIF3A, EIF3B, EIF3G and EIF3I; module B is composed of EIF3F, EIF3H, and EIF3M; and module C is composed of EIF3C, EIF3D, EIF3E, EIF3K and EIF3L. EIF3C of module C binds EIF3B of module A and EIF3H of module B, thereby linking the three modules. EIF3J is a labile subunit that binds to the eIF-3 complex via EIF3B. The eIF-3 complex interacts with RPS6KB1 under conditions of nutrient depletion. Mitogenic stimulation leads to binding and activation of a complex composed of MTOR and RPTOR, leading to phosphorylation and release of RPS6KB1 and binding of EIF4B to eIF-3.</text>
</comment>
<comment type="subcellular location">
    <subcellularLocation>
        <location evidence="2">Cytoplasm</location>
    </subcellularLocation>
</comment>
<comment type="similarity">
    <text evidence="2">Belongs to the eIF-3 subunit M family.</text>
</comment>
<comment type="sequence caution" evidence="4">
    <conflict type="erroneous termination">
        <sequence resource="EMBL-CDS" id="AAI02131"/>
    </conflict>
    <text>Truncated C-terminus.</text>
</comment>
<reference key="1">
    <citation type="submission" date="2005-08" db="EMBL/GenBank/DDBJ databases">
        <authorList>
            <consortium name="NIH - Mammalian Gene Collection (MGC) project"/>
        </authorList>
    </citation>
    <scope>NUCLEOTIDE SEQUENCE [LARGE SCALE MRNA]</scope>
    <source>
        <strain>Crossbred X Angus</strain>
        <tissue>Ileum</tissue>
    </source>
</reference>
<organism>
    <name type="scientific">Bos taurus</name>
    <name type="common">Bovine</name>
    <dbReference type="NCBI Taxonomy" id="9913"/>
    <lineage>
        <taxon>Eukaryota</taxon>
        <taxon>Metazoa</taxon>
        <taxon>Chordata</taxon>
        <taxon>Craniata</taxon>
        <taxon>Vertebrata</taxon>
        <taxon>Euteleostomi</taxon>
        <taxon>Mammalia</taxon>
        <taxon>Eutheria</taxon>
        <taxon>Laurasiatheria</taxon>
        <taxon>Artiodactyla</taxon>
        <taxon>Ruminantia</taxon>
        <taxon>Pecora</taxon>
        <taxon>Bovidae</taxon>
        <taxon>Bovinae</taxon>
        <taxon>Bos</taxon>
    </lineage>
</organism>
<protein>
    <recommendedName>
        <fullName evidence="2">Eukaryotic translation initiation factor 3 subunit M</fullName>
        <shortName evidence="2">eIF3m</shortName>
    </recommendedName>
</protein>
<keyword id="KW-0007">Acetylation</keyword>
<keyword id="KW-0963">Cytoplasm</keyword>
<keyword id="KW-0396">Initiation factor</keyword>
<keyword id="KW-0597">Phosphoprotein</keyword>
<keyword id="KW-0648">Protein biosynthesis</keyword>
<keyword id="KW-1185">Reference proteome</keyword>
<dbReference type="EMBL" id="BC102130">
    <property type="protein sequence ID" value="AAI02131.1"/>
    <property type="status" value="ALT_SEQ"/>
    <property type="molecule type" value="mRNA"/>
</dbReference>
<dbReference type="RefSeq" id="NP_001030389.2">
    <property type="nucleotide sequence ID" value="NM_001035312.2"/>
</dbReference>
<dbReference type="SMR" id="Q3T148"/>
<dbReference type="FunCoup" id="Q3T148">
    <property type="interactions" value="1987"/>
</dbReference>
<dbReference type="STRING" id="9913.ENSBTAP00000007021"/>
<dbReference type="PaxDb" id="9913-ENSBTAP00000007021"/>
<dbReference type="GeneID" id="515543"/>
<dbReference type="KEGG" id="bta:515543"/>
<dbReference type="CTD" id="10480"/>
<dbReference type="eggNOG" id="KOG2753">
    <property type="taxonomic scope" value="Eukaryota"/>
</dbReference>
<dbReference type="InParanoid" id="Q3T148"/>
<dbReference type="OrthoDB" id="10267031at2759"/>
<dbReference type="Proteomes" id="UP000009136">
    <property type="component" value="Unplaced"/>
</dbReference>
<dbReference type="GO" id="GO:0016282">
    <property type="term" value="C:eukaryotic 43S preinitiation complex"/>
    <property type="evidence" value="ECO:0007669"/>
    <property type="project" value="UniProtKB-UniRule"/>
</dbReference>
<dbReference type="GO" id="GO:0033290">
    <property type="term" value="C:eukaryotic 48S preinitiation complex"/>
    <property type="evidence" value="ECO:0007669"/>
    <property type="project" value="UniProtKB-UniRule"/>
</dbReference>
<dbReference type="GO" id="GO:0005852">
    <property type="term" value="C:eukaryotic translation initiation factor 3 complex"/>
    <property type="evidence" value="ECO:0000318"/>
    <property type="project" value="GO_Central"/>
</dbReference>
<dbReference type="GO" id="GO:0071541">
    <property type="term" value="C:eukaryotic translation initiation factor 3 complex, eIF3m"/>
    <property type="evidence" value="ECO:0007669"/>
    <property type="project" value="UniProtKB-UniRule"/>
</dbReference>
<dbReference type="GO" id="GO:0003743">
    <property type="term" value="F:translation initiation factor activity"/>
    <property type="evidence" value="ECO:0007669"/>
    <property type="project" value="UniProtKB-UniRule"/>
</dbReference>
<dbReference type="GO" id="GO:0002183">
    <property type="term" value="P:cytoplasmic translational initiation"/>
    <property type="evidence" value="ECO:0000318"/>
    <property type="project" value="GO_Central"/>
</dbReference>
<dbReference type="GO" id="GO:0001732">
    <property type="term" value="P:formation of cytoplasmic translation initiation complex"/>
    <property type="evidence" value="ECO:0007669"/>
    <property type="project" value="UniProtKB-UniRule"/>
</dbReference>
<dbReference type="HAMAP" id="MF_03012">
    <property type="entry name" value="eIF3m"/>
    <property type="match status" value="1"/>
</dbReference>
<dbReference type="InterPro" id="IPR016024">
    <property type="entry name" value="ARM-type_fold"/>
</dbReference>
<dbReference type="InterPro" id="IPR045237">
    <property type="entry name" value="COPS7/eIF3m"/>
</dbReference>
<dbReference type="InterPro" id="IPR027528">
    <property type="entry name" value="eIF3m"/>
</dbReference>
<dbReference type="InterPro" id="IPR040750">
    <property type="entry name" value="eIF3m_C_helix"/>
</dbReference>
<dbReference type="InterPro" id="IPR000717">
    <property type="entry name" value="PCI_dom"/>
</dbReference>
<dbReference type="InterPro" id="IPR036390">
    <property type="entry name" value="WH_DNA-bd_sf"/>
</dbReference>
<dbReference type="PANTHER" id="PTHR15350">
    <property type="entry name" value="COP9 SIGNALOSOME COMPLEX SUBUNIT 7/DENDRITIC CELL PROTEIN GA17"/>
    <property type="match status" value="1"/>
</dbReference>
<dbReference type="PANTHER" id="PTHR15350:SF2">
    <property type="entry name" value="EUKARYOTIC TRANSLATION INITIATION FACTOR 3 SUBUNIT M"/>
    <property type="match status" value="1"/>
</dbReference>
<dbReference type="Pfam" id="PF18005">
    <property type="entry name" value="eIF3m_C_helix"/>
    <property type="match status" value="1"/>
</dbReference>
<dbReference type="Pfam" id="PF01399">
    <property type="entry name" value="PCI"/>
    <property type="match status" value="1"/>
</dbReference>
<dbReference type="SMART" id="SM00088">
    <property type="entry name" value="PINT"/>
    <property type="match status" value="1"/>
</dbReference>
<dbReference type="SUPFAM" id="SSF48371">
    <property type="entry name" value="ARM repeat"/>
    <property type="match status" value="1"/>
</dbReference>
<dbReference type="SUPFAM" id="SSF46785">
    <property type="entry name" value="Winged helix' DNA-binding domain"/>
    <property type="match status" value="1"/>
</dbReference>
<dbReference type="PROSITE" id="PS50250">
    <property type="entry name" value="PCI"/>
    <property type="match status" value="1"/>
</dbReference>
<accession>Q3T148</accession>
<feature type="initiator methionine" description="Removed" evidence="2">
    <location>
        <position position="1"/>
    </location>
</feature>
<feature type="chain" id="PRO_0000308194" description="Eukaryotic translation initiation factor 3 subunit M">
    <location>
        <begin position="2"/>
        <end position="373"/>
    </location>
</feature>
<feature type="domain" description="PCI" evidence="3">
    <location>
        <begin position="180"/>
        <end position="338"/>
    </location>
</feature>
<feature type="modified residue" description="N-acetylserine" evidence="1 2">
    <location>
        <position position="2"/>
    </location>
</feature>
<feature type="modified residue" description="Phosphoserine" evidence="1">
    <location>
        <position position="2"/>
    </location>
</feature>
<feature type="modified residue" description="Phosphoserine" evidence="1">
    <location>
        <position position="152"/>
    </location>
</feature>
<feature type="modified residue" description="N6-acetyllysine" evidence="1">
    <location>
        <position position="253"/>
    </location>
</feature>
<feature type="modified residue" description="Phosphoserine" evidence="1">
    <location>
        <position position="366"/>
    </location>
</feature>
<sequence>MSVPAFIDISEEDQAAELRAYLKSKGAEISEENSEGGLHVDLAQIIEACDVCLKEDDKDVESVMNSVVSLLLILEPDKQEALIESLCEKLVKFREGERPSLRLQLLSNLFHGMDKNTPVRYTVYCSLIKVAASCGAIQYIPTELDQVRKWISDWNLTTEKKHTLLRLLYEALVDCKKSDAASKVMVELLGSYTEDNASQARVDAHRCIVRALKDPNAFLFDHLLTLKPVKFLEGELIHDLLTIFVSAKLAYVKFYQNNKDFIDSLGLLHEQNMAKMRLLTFMGMAVENKEISFDTMQQELQIGADDVEAFVIDAVRTKMVYCKIDQTQRKVVVSHSTHRTFGKQQWQQLYDTLNAWKQNLNKVKNSLLSLSDT</sequence>
<evidence type="ECO:0000250" key="1">
    <source>
        <dbReference type="UniProtKB" id="Q7L2H7"/>
    </source>
</evidence>
<evidence type="ECO:0000255" key="2">
    <source>
        <dbReference type="HAMAP-Rule" id="MF_03012"/>
    </source>
</evidence>
<evidence type="ECO:0000255" key="3">
    <source>
        <dbReference type="PROSITE-ProRule" id="PRU01185"/>
    </source>
</evidence>
<evidence type="ECO:0000305" key="4"/>
<name>EIF3M_BOVIN</name>
<proteinExistence type="evidence at transcript level"/>